<organism>
    <name type="scientific">Danio rerio</name>
    <name type="common">Zebrafish</name>
    <name type="synonym">Brachydanio rerio</name>
    <dbReference type="NCBI Taxonomy" id="7955"/>
    <lineage>
        <taxon>Eukaryota</taxon>
        <taxon>Metazoa</taxon>
        <taxon>Chordata</taxon>
        <taxon>Craniata</taxon>
        <taxon>Vertebrata</taxon>
        <taxon>Euteleostomi</taxon>
        <taxon>Actinopterygii</taxon>
        <taxon>Neopterygii</taxon>
        <taxon>Teleostei</taxon>
        <taxon>Ostariophysi</taxon>
        <taxon>Cypriniformes</taxon>
        <taxon>Danionidae</taxon>
        <taxon>Danioninae</taxon>
        <taxon>Danio</taxon>
    </lineage>
</organism>
<reference key="1">
    <citation type="journal article" date="2004" name="Proc. Natl. Acad. Sci. U.S.A.">
        <title>Identification of 315 genes essential for early zebrafish development.</title>
        <authorList>
            <person name="Amsterdam A."/>
            <person name="Nissen R.M."/>
            <person name="Sun Z."/>
            <person name="Swindell E.C."/>
            <person name="Farrington S."/>
            <person name="Hopkins N."/>
        </authorList>
    </citation>
    <scope>NUCLEOTIDE SEQUENCE [LARGE SCALE MRNA]</scope>
    <scope>FUNCTION</scope>
</reference>
<reference key="2">
    <citation type="journal article" date="2013" name="Nature">
        <title>The zebrafish reference genome sequence and its relationship to the human genome.</title>
        <authorList>
            <person name="Howe K."/>
            <person name="Clark M.D."/>
            <person name="Torroja C.F."/>
            <person name="Torrance J."/>
            <person name="Berthelot C."/>
            <person name="Muffato M."/>
            <person name="Collins J.E."/>
            <person name="Humphray S."/>
            <person name="McLaren K."/>
            <person name="Matthews L."/>
            <person name="McLaren S."/>
            <person name="Sealy I."/>
            <person name="Caccamo M."/>
            <person name="Churcher C."/>
            <person name="Scott C."/>
            <person name="Barrett J.C."/>
            <person name="Koch R."/>
            <person name="Rauch G.J."/>
            <person name="White S."/>
            <person name="Chow W."/>
            <person name="Kilian B."/>
            <person name="Quintais L.T."/>
            <person name="Guerra-Assuncao J.A."/>
            <person name="Zhou Y."/>
            <person name="Gu Y."/>
            <person name="Yen J."/>
            <person name="Vogel J.H."/>
            <person name="Eyre T."/>
            <person name="Redmond S."/>
            <person name="Banerjee R."/>
            <person name="Chi J."/>
            <person name="Fu B."/>
            <person name="Langley E."/>
            <person name="Maguire S.F."/>
            <person name="Laird G.K."/>
            <person name="Lloyd D."/>
            <person name="Kenyon E."/>
            <person name="Donaldson S."/>
            <person name="Sehra H."/>
            <person name="Almeida-King J."/>
            <person name="Loveland J."/>
            <person name="Trevanion S."/>
            <person name="Jones M."/>
            <person name="Quail M."/>
            <person name="Willey D."/>
            <person name="Hunt A."/>
            <person name="Burton J."/>
            <person name="Sims S."/>
            <person name="McLay K."/>
            <person name="Plumb B."/>
            <person name="Davis J."/>
            <person name="Clee C."/>
            <person name="Oliver K."/>
            <person name="Clark R."/>
            <person name="Riddle C."/>
            <person name="Elliot D."/>
            <person name="Threadgold G."/>
            <person name="Harden G."/>
            <person name="Ware D."/>
            <person name="Begum S."/>
            <person name="Mortimore B."/>
            <person name="Kerry G."/>
            <person name="Heath P."/>
            <person name="Phillimore B."/>
            <person name="Tracey A."/>
            <person name="Corby N."/>
            <person name="Dunn M."/>
            <person name="Johnson C."/>
            <person name="Wood J."/>
            <person name="Clark S."/>
            <person name="Pelan S."/>
            <person name="Griffiths G."/>
            <person name="Smith M."/>
            <person name="Glithero R."/>
            <person name="Howden P."/>
            <person name="Barker N."/>
            <person name="Lloyd C."/>
            <person name="Stevens C."/>
            <person name="Harley J."/>
            <person name="Holt K."/>
            <person name="Panagiotidis G."/>
            <person name="Lovell J."/>
            <person name="Beasley H."/>
            <person name="Henderson C."/>
            <person name="Gordon D."/>
            <person name="Auger K."/>
            <person name="Wright D."/>
            <person name="Collins J."/>
            <person name="Raisen C."/>
            <person name="Dyer L."/>
            <person name="Leung K."/>
            <person name="Robertson L."/>
            <person name="Ambridge K."/>
            <person name="Leongamornlert D."/>
            <person name="McGuire S."/>
            <person name="Gilderthorp R."/>
            <person name="Griffiths C."/>
            <person name="Manthravadi D."/>
            <person name="Nichol S."/>
            <person name="Barker G."/>
            <person name="Whitehead S."/>
            <person name="Kay M."/>
            <person name="Brown J."/>
            <person name="Murnane C."/>
            <person name="Gray E."/>
            <person name="Humphries M."/>
            <person name="Sycamore N."/>
            <person name="Barker D."/>
            <person name="Saunders D."/>
            <person name="Wallis J."/>
            <person name="Babbage A."/>
            <person name="Hammond S."/>
            <person name="Mashreghi-Mohammadi M."/>
            <person name="Barr L."/>
            <person name="Martin S."/>
            <person name="Wray P."/>
            <person name="Ellington A."/>
            <person name="Matthews N."/>
            <person name="Ellwood M."/>
            <person name="Woodmansey R."/>
            <person name="Clark G."/>
            <person name="Cooper J."/>
            <person name="Tromans A."/>
            <person name="Grafham D."/>
            <person name="Skuce C."/>
            <person name="Pandian R."/>
            <person name="Andrews R."/>
            <person name="Harrison E."/>
            <person name="Kimberley A."/>
            <person name="Garnett J."/>
            <person name="Fosker N."/>
            <person name="Hall R."/>
            <person name="Garner P."/>
            <person name="Kelly D."/>
            <person name="Bird C."/>
            <person name="Palmer S."/>
            <person name="Gehring I."/>
            <person name="Berger A."/>
            <person name="Dooley C.M."/>
            <person name="Ersan-Urun Z."/>
            <person name="Eser C."/>
            <person name="Geiger H."/>
            <person name="Geisler M."/>
            <person name="Karotki L."/>
            <person name="Kirn A."/>
            <person name="Konantz J."/>
            <person name="Konantz M."/>
            <person name="Oberlander M."/>
            <person name="Rudolph-Geiger S."/>
            <person name="Teucke M."/>
            <person name="Lanz C."/>
            <person name="Raddatz G."/>
            <person name="Osoegawa K."/>
            <person name="Zhu B."/>
            <person name="Rapp A."/>
            <person name="Widaa S."/>
            <person name="Langford C."/>
            <person name="Yang F."/>
            <person name="Schuster S.C."/>
            <person name="Carter N.P."/>
            <person name="Harrow J."/>
            <person name="Ning Z."/>
            <person name="Herrero J."/>
            <person name="Searle S.M."/>
            <person name="Enright A."/>
            <person name="Geisler R."/>
            <person name="Plasterk R.H."/>
            <person name="Lee C."/>
            <person name="Westerfield M."/>
            <person name="de Jong P.J."/>
            <person name="Zon L.I."/>
            <person name="Postlethwait J.H."/>
            <person name="Nusslein-Volhard C."/>
            <person name="Hubbard T.J."/>
            <person name="Roest Crollius H."/>
            <person name="Rogers J."/>
            <person name="Stemple D.L."/>
        </authorList>
    </citation>
    <scope>NUCLEOTIDE SEQUENCE [LARGE SCALE GENOMIC DNA]</scope>
    <source>
        <strain>Tuebingen</strain>
    </source>
</reference>
<reference key="3">
    <citation type="submission" date="2005-06" db="EMBL/GenBank/DDBJ databases">
        <authorList>
            <consortium name="NIH - Zebrafish Gene Collection (ZGC) project"/>
        </authorList>
    </citation>
    <scope>NUCLEOTIDE SEQUENCE [LARGE SCALE MRNA]</scope>
    <source>
        <tissue>Embryo</tissue>
    </source>
</reference>
<feature type="chain" id="PRO_0000074541" description="N-acetyltransferase ESCO2">
    <location>
        <begin position="1"/>
        <end position="609"/>
    </location>
</feature>
<feature type="zinc finger region" description="CCHH-type">
    <location>
        <begin position="392"/>
        <end position="416"/>
    </location>
</feature>
<feature type="region of interest" description="Disordered" evidence="2">
    <location>
        <begin position="1"/>
        <end position="71"/>
    </location>
</feature>
<feature type="region of interest" description="Disordered" evidence="2">
    <location>
        <begin position="100"/>
        <end position="165"/>
    </location>
</feature>
<feature type="region of interest" description="Disordered" evidence="2">
    <location>
        <begin position="197"/>
        <end position="241"/>
    </location>
</feature>
<feature type="region of interest" description="Disordered" evidence="2">
    <location>
        <begin position="314"/>
        <end position="357"/>
    </location>
</feature>
<feature type="compositionally biased region" description="Polar residues" evidence="2">
    <location>
        <begin position="13"/>
        <end position="22"/>
    </location>
</feature>
<feature type="compositionally biased region" description="Polar residues" evidence="2">
    <location>
        <begin position="41"/>
        <end position="54"/>
    </location>
</feature>
<feature type="compositionally biased region" description="Basic residues" evidence="2">
    <location>
        <begin position="126"/>
        <end position="135"/>
    </location>
</feature>
<feature type="compositionally biased region" description="Basic and acidic residues" evidence="2">
    <location>
        <begin position="214"/>
        <end position="230"/>
    </location>
</feature>
<feature type="compositionally biased region" description="Polar residues" evidence="2">
    <location>
        <begin position="345"/>
        <end position="355"/>
    </location>
</feature>
<feature type="sequence conflict" description="In Ref. 3; AAH96847." evidence="4" ref="3">
    <original>R</original>
    <variation>Q</variation>
    <location>
        <position position="34"/>
    </location>
</feature>
<feature type="sequence conflict" description="In Ref. 3; AAH96847." evidence="4" ref="3">
    <original>R</original>
    <variation>Q</variation>
    <location>
        <position position="72"/>
    </location>
</feature>
<feature type="sequence conflict" description="In Ref. 3; AAH96847." evidence="4" ref="3">
    <original>P</original>
    <variation>L</variation>
    <location>
        <position position="105"/>
    </location>
</feature>
<feature type="sequence conflict" description="In Ref. 3; AAH96847." evidence="4" ref="3">
    <original>K</original>
    <variation>N</variation>
    <location>
        <position position="150"/>
    </location>
</feature>
<feature type="sequence conflict" description="In Ref. 3; AAH96847." evidence="4" ref="3">
    <original>T</original>
    <variation>K</variation>
    <location>
        <position position="154"/>
    </location>
</feature>
<feature type="sequence conflict" description="In Ref. 3; AAH96847." evidence="4" ref="3">
    <original>S</original>
    <variation>P</variation>
    <location>
        <position position="157"/>
    </location>
</feature>
<feature type="sequence conflict" description="In Ref. 3; AAH96847." evidence="4" ref="3">
    <original>K</original>
    <variation>N</variation>
    <location>
        <position position="160"/>
    </location>
</feature>
<feature type="sequence conflict" description="In Ref. 3; AAH96847." evidence="4" ref="3">
    <original>A</original>
    <variation>T</variation>
    <location>
        <position position="171"/>
    </location>
</feature>
<feature type="sequence conflict" description="In Ref. 3; AAH96847." evidence="4" ref="3">
    <original>T</original>
    <variation>A</variation>
    <location>
        <position position="210"/>
    </location>
</feature>
<feature type="sequence conflict" description="In Ref. 3; AAH96847." evidence="4" ref="3">
    <original>L</original>
    <variation>V</variation>
    <location>
        <position position="230"/>
    </location>
</feature>
<feature type="sequence conflict" description="In Ref. 3; AAH96847." evidence="4" ref="3">
    <original>HDK</original>
    <variation>RDI</variation>
    <location>
        <begin position="256"/>
        <end position="258"/>
    </location>
</feature>
<feature type="sequence conflict" description="In Ref. 1; AAT68122." evidence="4" ref="1">
    <original>RP</original>
    <variation>IF</variation>
    <location>
        <begin position="335"/>
        <end position="336"/>
    </location>
</feature>
<feature type="sequence conflict" description="In Ref. 3; AAH96847." evidence="4" ref="3">
    <original>P</original>
    <variation>H</variation>
    <location>
        <position position="336"/>
    </location>
</feature>
<feature type="sequence conflict" description="In Ref. 3; AAH96847." evidence="4" ref="3">
    <original>A</original>
    <variation>T</variation>
    <location>
        <position position="356"/>
    </location>
</feature>
<feature type="sequence conflict" description="In Ref. 3; AAH96847." evidence="4" ref="3">
    <original>A</original>
    <variation>P</variation>
    <location>
        <position position="362"/>
    </location>
</feature>
<name>ESCO2_DANRE</name>
<accession>Q5SPR8</accession>
<accession>Q4V9K9</accession>
<accession>Q6DRF5</accession>
<comment type="function">
    <text evidence="1 3">Acetyltransferase required for the establishment of sister chromatid cohesion. Couples the processes of cohesion and DNA replication to ensure that only sister chromatids become paired together (By similarity). Essential for early development (PubMed:15256591).</text>
</comment>
<comment type="catalytic activity">
    <reaction evidence="1">
        <text>L-lysyl-[protein] + acetyl-CoA = N(6)-acetyl-L-lysyl-[protein] + CoA + H(+)</text>
        <dbReference type="Rhea" id="RHEA:45948"/>
        <dbReference type="Rhea" id="RHEA-COMP:9752"/>
        <dbReference type="Rhea" id="RHEA-COMP:10731"/>
        <dbReference type="ChEBI" id="CHEBI:15378"/>
        <dbReference type="ChEBI" id="CHEBI:29969"/>
        <dbReference type="ChEBI" id="CHEBI:57287"/>
        <dbReference type="ChEBI" id="CHEBI:57288"/>
        <dbReference type="ChEBI" id="CHEBI:61930"/>
    </reaction>
</comment>
<comment type="subcellular location">
    <subcellularLocation>
        <location evidence="1">Nucleus</location>
    </subcellularLocation>
    <subcellularLocation>
        <location evidence="1">Chromosome</location>
    </subcellularLocation>
</comment>
<comment type="domain">
    <text evidence="1">The N-terminal region seems to be responsible for association with chromosomes, thus excluding any involvement of the Zn finger in this process.</text>
</comment>
<comment type="similarity">
    <text evidence="4">Belongs to the acetyltransferase family. ECO subfamily.</text>
</comment>
<proteinExistence type="evidence at transcript level"/>
<keyword id="KW-0012">Acyltransferase</keyword>
<keyword id="KW-0131">Cell cycle</keyword>
<keyword id="KW-0158">Chromosome</keyword>
<keyword id="KW-0479">Metal-binding</keyword>
<keyword id="KW-0539">Nucleus</keyword>
<keyword id="KW-1185">Reference proteome</keyword>
<keyword id="KW-0808">Transferase</keyword>
<keyword id="KW-0862">Zinc</keyword>
<keyword id="KW-0863">Zinc-finger</keyword>
<sequence length="609" mass="68360">MLSRKRKHGSPDAESNPSKKQITSLRSSPRRTTRQKENIPISLNSPQKIPSTPKKTQRAFLLESPPKRVSPRKAVLGAGTFYSKQKPLYLTPLERKVLKEAKSPPSVTNKEPSRPPLTAANQVVKPAKKVQKKPRASAPQSNLKGYFTAKPKATKSSSDKQTDQVLKSTMAPISFSSMKSKGKPKLVVGAAFFNTGKKPTSMYKKSAQNTKPKPTYEKPSIRKPVREKELVTAPGQRSPVRRAVFLKKQPEVEVSHDKRESTQAPMSPQVLADVHGITKELRVVLRRSVSPETGSQDAPSEADSVFDVSDLLLPDHDSSHDEEESSVYPIFGTKRPQKKGKLSPPLNSSTPSALTATPALKAKERSMLRREMKKQTDNQLIIDAGQKQFGATTCASCGMLYSTDSPEDNFQHTQFHQRFLDTIKFVGWKKERVVAEFWDGKIILVLPDDPKYATRKAEDVRRIADSELGFQQITLSSPSSAKTYLFINTDRMVVGCLVAENIRQAYRVLEQQEKQKDMSKEDFMEHHRTWCCSTVPEKALCGVSRIWVFSLMRRKSVATRLLDTARNTFMYGSHLTKEEIAFSDPTPQGKLFATKYCQTPTFLVYNFIS</sequence>
<protein>
    <recommendedName>
        <fullName>N-acetyltransferase ESCO2</fullName>
        <ecNumber evidence="1">2.3.1.-</ecNumber>
    </recommendedName>
    <alternativeName>
        <fullName>Establishment of cohesion 1 homolog 2</fullName>
        <shortName>ECO1 homolog 2</shortName>
    </alternativeName>
</protein>
<evidence type="ECO:0000250" key="1">
    <source>
        <dbReference type="UniProtKB" id="Q56NI9"/>
    </source>
</evidence>
<evidence type="ECO:0000256" key="2">
    <source>
        <dbReference type="SAM" id="MobiDB-lite"/>
    </source>
</evidence>
<evidence type="ECO:0000269" key="3">
    <source>
    </source>
</evidence>
<evidence type="ECO:0000305" key="4"/>
<gene>
    <name type="primary">esco2</name>
    <name type="ORF">si:dkey-217m5.6</name>
    <name type="ORF">zgc:111795</name>
</gene>
<dbReference type="EC" id="2.3.1.-" evidence="1"/>
<dbReference type="EMBL" id="AY648804">
    <property type="protein sequence ID" value="AAT68122.1"/>
    <property type="molecule type" value="mRNA"/>
</dbReference>
<dbReference type="EMBL" id="AL845306">
    <property type="protein sequence ID" value="CAI20931.1"/>
    <property type="molecule type" value="Genomic_DNA"/>
</dbReference>
<dbReference type="EMBL" id="BC096847">
    <property type="protein sequence ID" value="AAH96847.1"/>
    <property type="molecule type" value="mRNA"/>
</dbReference>
<dbReference type="RefSeq" id="NP_001003872.1">
    <property type="nucleotide sequence ID" value="NM_001003872.1"/>
</dbReference>
<dbReference type="SMR" id="Q5SPR8"/>
<dbReference type="FunCoup" id="Q5SPR8">
    <property type="interactions" value="451"/>
</dbReference>
<dbReference type="STRING" id="7955.ENSDARP00000002535"/>
<dbReference type="PaxDb" id="7955-ENSDARP00000002535"/>
<dbReference type="Ensembl" id="ENSDART00000009164">
    <property type="protein sequence ID" value="ENSDARP00000002535"/>
    <property type="gene ID" value="ENSDARG00000014685"/>
</dbReference>
<dbReference type="GeneID" id="445395"/>
<dbReference type="KEGG" id="dre:445395"/>
<dbReference type="AGR" id="ZFIN:ZDB-GENE-050913-156"/>
<dbReference type="CTD" id="157570"/>
<dbReference type="ZFIN" id="ZDB-GENE-050913-156">
    <property type="gene designation" value="esco2"/>
</dbReference>
<dbReference type="eggNOG" id="KOG3014">
    <property type="taxonomic scope" value="Eukaryota"/>
</dbReference>
<dbReference type="HOGENOM" id="CLU_031546_1_0_1"/>
<dbReference type="InParanoid" id="Q5SPR8"/>
<dbReference type="OMA" id="PTDWMDS"/>
<dbReference type="OrthoDB" id="428854at2759"/>
<dbReference type="PhylomeDB" id="Q5SPR8"/>
<dbReference type="TreeFam" id="TF314027"/>
<dbReference type="Reactome" id="R-DRE-2468052">
    <property type="pathway name" value="Establishment of Sister Chromatid Cohesion"/>
</dbReference>
<dbReference type="PRO" id="PR:Q5SPR8"/>
<dbReference type="Proteomes" id="UP000000437">
    <property type="component" value="Chromosome 20"/>
</dbReference>
<dbReference type="Bgee" id="ENSDARG00000014685">
    <property type="expression patterns" value="Expressed in testis and 36 other cell types or tissues"/>
</dbReference>
<dbReference type="GO" id="GO:0000785">
    <property type="term" value="C:chromatin"/>
    <property type="evidence" value="ECO:0000250"/>
    <property type="project" value="UniProtKB"/>
</dbReference>
<dbReference type="GO" id="GO:0005694">
    <property type="term" value="C:chromosome"/>
    <property type="evidence" value="ECO:0000250"/>
    <property type="project" value="UniProtKB"/>
</dbReference>
<dbReference type="GO" id="GO:0005634">
    <property type="term" value="C:nucleus"/>
    <property type="evidence" value="ECO:0000318"/>
    <property type="project" value="GO_Central"/>
</dbReference>
<dbReference type="GO" id="GO:0016407">
    <property type="term" value="F:acetyltransferase activity"/>
    <property type="evidence" value="ECO:0000250"/>
    <property type="project" value="UniProtKB"/>
</dbReference>
<dbReference type="GO" id="GO:0061733">
    <property type="term" value="F:protein-lysine-acetyltransferase activity"/>
    <property type="evidence" value="ECO:0000318"/>
    <property type="project" value="GO_Central"/>
</dbReference>
<dbReference type="GO" id="GO:0008270">
    <property type="term" value="F:zinc ion binding"/>
    <property type="evidence" value="ECO:0007669"/>
    <property type="project" value="UniProtKB-KW"/>
</dbReference>
<dbReference type="GO" id="GO:1990523">
    <property type="term" value="P:bone regeneration"/>
    <property type="evidence" value="ECO:0000315"/>
    <property type="project" value="ZFIN"/>
</dbReference>
<dbReference type="GO" id="GO:0031101">
    <property type="term" value="P:fin regeneration"/>
    <property type="evidence" value="ECO:0000315"/>
    <property type="project" value="ZFIN"/>
</dbReference>
<dbReference type="GO" id="GO:0007507">
    <property type="term" value="P:heart development"/>
    <property type="evidence" value="ECO:0000315"/>
    <property type="project" value="ZFIN"/>
</dbReference>
<dbReference type="GO" id="GO:0000278">
    <property type="term" value="P:mitotic cell cycle"/>
    <property type="evidence" value="ECO:0000315"/>
    <property type="project" value="ZFIN"/>
</dbReference>
<dbReference type="GO" id="GO:0007064">
    <property type="term" value="P:mitotic sister chromatid cohesion"/>
    <property type="evidence" value="ECO:0000318"/>
    <property type="project" value="GO_Central"/>
</dbReference>
<dbReference type="GO" id="GO:0006275">
    <property type="term" value="P:regulation of DNA replication"/>
    <property type="evidence" value="ECO:0000250"/>
    <property type="project" value="UniProtKB"/>
</dbReference>
<dbReference type="GO" id="GO:0007062">
    <property type="term" value="P:sister chromatid cohesion"/>
    <property type="evidence" value="ECO:0000315"/>
    <property type="project" value="ZFIN"/>
</dbReference>
<dbReference type="InterPro" id="IPR028005">
    <property type="entry name" value="AcTrfase_ESCO_Znf_dom"/>
</dbReference>
<dbReference type="InterPro" id="IPR028009">
    <property type="entry name" value="ESCO_Acetyltransf_dom"/>
</dbReference>
<dbReference type="PANTHER" id="PTHR45884">
    <property type="entry name" value="N-ACETYLTRANSFERASE ECO"/>
    <property type="match status" value="1"/>
</dbReference>
<dbReference type="PANTHER" id="PTHR45884:SF3">
    <property type="entry name" value="N-ACETYLTRANSFERASE ESCO2"/>
    <property type="match status" value="1"/>
</dbReference>
<dbReference type="Pfam" id="PF13880">
    <property type="entry name" value="Acetyltransf_13"/>
    <property type="match status" value="1"/>
</dbReference>
<dbReference type="Pfam" id="PF13878">
    <property type="entry name" value="zf-C2H2_3"/>
    <property type="match status" value="1"/>
</dbReference>